<evidence type="ECO:0000255" key="1">
    <source>
        <dbReference type="HAMAP-Rule" id="MF_00419"/>
    </source>
</evidence>
<evidence type="ECO:0000256" key="2">
    <source>
        <dbReference type="SAM" id="MobiDB-lite"/>
    </source>
</evidence>
<organism>
    <name type="scientific">Salmonella paratyphi A (strain ATCC 9150 / SARB42)</name>
    <dbReference type="NCBI Taxonomy" id="295319"/>
    <lineage>
        <taxon>Bacteria</taxon>
        <taxon>Pseudomonadati</taxon>
        <taxon>Pseudomonadota</taxon>
        <taxon>Gammaproteobacteria</taxon>
        <taxon>Enterobacterales</taxon>
        <taxon>Enterobacteriaceae</taxon>
        <taxon>Salmonella</taxon>
    </lineage>
</organism>
<accession>Q5PIG8</accession>
<reference key="1">
    <citation type="journal article" date="2004" name="Nat. Genet.">
        <title>Comparison of genome degradation in Paratyphi A and Typhi, human-restricted serovars of Salmonella enterica that cause typhoid.</title>
        <authorList>
            <person name="McClelland M."/>
            <person name="Sanderson K.E."/>
            <person name="Clifton S.W."/>
            <person name="Latreille P."/>
            <person name="Porwollik S."/>
            <person name="Sabo A."/>
            <person name="Meyer R."/>
            <person name="Bieri T."/>
            <person name="Ozersky P."/>
            <person name="McLellan M."/>
            <person name="Harkins C.R."/>
            <person name="Wang C."/>
            <person name="Nguyen C."/>
            <person name="Berghoff A."/>
            <person name="Elliott G."/>
            <person name="Kohlberg S."/>
            <person name="Strong C."/>
            <person name="Du F."/>
            <person name="Carter J."/>
            <person name="Kremizki C."/>
            <person name="Layman D."/>
            <person name="Leonard S."/>
            <person name="Sun H."/>
            <person name="Fulton L."/>
            <person name="Nash W."/>
            <person name="Miner T."/>
            <person name="Minx P."/>
            <person name="Delehaunty K."/>
            <person name="Fronick C."/>
            <person name="Magrini V."/>
            <person name="Nhan M."/>
            <person name="Warren W."/>
            <person name="Florea L."/>
            <person name="Spieth J."/>
            <person name="Wilson R.K."/>
        </authorList>
    </citation>
    <scope>NUCLEOTIDE SEQUENCE [LARGE SCALE GENOMIC DNA]</scope>
    <source>
        <strain>ATCC 9150 / SARB42</strain>
    </source>
</reference>
<proteinExistence type="inferred from homology"/>
<dbReference type="EC" id="6.3.5.3" evidence="1"/>
<dbReference type="EMBL" id="CP000026">
    <property type="protein sequence ID" value="AAV76321.1"/>
    <property type="molecule type" value="Genomic_DNA"/>
</dbReference>
<dbReference type="RefSeq" id="WP_000970025.1">
    <property type="nucleotide sequence ID" value="NC_006511.1"/>
</dbReference>
<dbReference type="SMR" id="Q5PIG8"/>
<dbReference type="MEROPS" id="C56.972"/>
<dbReference type="KEGG" id="spt:SPA0300"/>
<dbReference type="HOGENOM" id="CLU_001031_0_2_6"/>
<dbReference type="UniPathway" id="UPA00074">
    <property type="reaction ID" value="UER00128"/>
</dbReference>
<dbReference type="Proteomes" id="UP000008185">
    <property type="component" value="Chromosome"/>
</dbReference>
<dbReference type="GO" id="GO:0005737">
    <property type="term" value="C:cytoplasm"/>
    <property type="evidence" value="ECO:0007669"/>
    <property type="project" value="UniProtKB-SubCell"/>
</dbReference>
<dbReference type="GO" id="GO:0005524">
    <property type="term" value="F:ATP binding"/>
    <property type="evidence" value="ECO:0007669"/>
    <property type="project" value="UniProtKB-UniRule"/>
</dbReference>
<dbReference type="GO" id="GO:0046872">
    <property type="term" value="F:metal ion binding"/>
    <property type="evidence" value="ECO:0007669"/>
    <property type="project" value="UniProtKB-KW"/>
</dbReference>
<dbReference type="GO" id="GO:0004642">
    <property type="term" value="F:phosphoribosylformylglycinamidine synthase activity"/>
    <property type="evidence" value="ECO:0007669"/>
    <property type="project" value="UniProtKB-UniRule"/>
</dbReference>
<dbReference type="GO" id="GO:0006189">
    <property type="term" value="P:'de novo' IMP biosynthetic process"/>
    <property type="evidence" value="ECO:0007669"/>
    <property type="project" value="UniProtKB-UniRule"/>
</dbReference>
<dbReference type="CDD" id="cd01740">
    <property type="entry name" value="GATase1_FGAR_AT"/>
    <property type="match status" value="1"/>
</dbReference>
<dbReference type="CDD" id="cd02193">
    <property type="entry name" value="PurL"/>
    <property type="match status" value="1"/>
</dbReference>
<dbReference type="CDD" id="cd02203">
    <property type="entry name" value="PurL_repeat1"/>
    <property type="match status" value="1"/>
</dbReference>
<dbReference type="FunFam" id="1.10.8.750:FF:000002">
    <property type="entry name" value="Phosphoribosylformylglycinamidine synthase"/>
    <property type="match status" value="1"/>
</dbReference>
<dbReference type="FunFam" id="3.30.1330.10:FF:000002">
    <property type="entry name" value="Phosphoribosylformylglycinamidine synthase"/>
    <property type="match status" value="1"/>
</dbReference>
<dbReference type="FunFam" id="3.30.1330.10:FF:000005">
    <property type="entry name" value="Phosphoribosylformylglycinamidine synthase"/>
    <property type="match status" value="1"/>
</dbReference>
<dbReference type="FunFam" id="3.40.50.880:FF:000008">
    <property type="entry name" value="Phosphoribosylformylglycinamidine synthase"/>
    <property type="match status" value="1"/>
</dbReference>
<dbReference type="FunFam" id="3.90.650.10:FF:000002">
    <property type="entry name" value="Phosphoribosylformylglycinamidine synthase"/>
    <property type="match status" value="1"/>
</dbReference>
<dbReference type="FunFam" id="3.90.650.10:FF:000005">
    <property type="entry name" value="Phosphoribosylformylglycinamidine synthase"/>
    <property type="match status" value="1"/>
</dbReference>
<dbReference type="Gene3D" id="3.40.50.880">
    <property type="match status" value="1"/>
</dbReference>
<dbReference type="Gene3D" id="1.10.8.750">
    <property type="entry name" value="Phosphoribosylformylglycinamidine synthase, linker domain"/>
    <property type="match status" value="1"/>
</dbReference>
<dbReference type="Gene3D" id="3.90.650.10">
    <property type="entry name" value="PurM-like C-terminal domain"/>
    <property type="match status" value="2"/>
</dbReference>
<dbReference type="Gene3D" id="3.30.1330.10">
    <property type="entry name" value="PurM-like, N-terminal domain"/>
    <property type="match status" value="2"/>
</dbReference>
<dbReference type="HAMAP" id="MF_00419">
    <property type="entry name" value="PurL_1"/>
    <property type="match status" value="1"/>
</dbReference>
<dbReference type="InterPro" id="IPR029062">
    <property type="entry name" value="Class_I_gatase-like"/>
</dbReference>
<dbReference type="InterPro" id="IPR040707">
    <property type="entry name" value="FGAR-AT_N"/>
</dbReference>
<dbReference type="InterPro" id="IPR055181">
    <property type="entry name" value="FGAR-AT_PurM_N-like"/>
</dbReference>
<dbReference type="InterPro" id="IPR010073">
    <property type="entry name" value="PurL_large"/>
</dbReference>
<dbReference type="InterPro" id="IPR041609">
    <property type="entry name" value="PurL_linker"/>
</dbReference>
<dbReference type="InterPro" id="IPR010918">
    <property type="entry name" value="PurM-like_C_dom"/>
</dbReference>
<dbReference type="InterPro" id="IPR036676">
    <property type="entry name" value="PurM-like_C_sf"/>
</dbReference>
<dbReference type="InterPro" id="IPR036921">
    <property type="entry name" value="PurM-like_N_sf"/>
</dbReference>
<dbReference type="InterPro" id="IPR036604">
    <property type="entry name" value="PurS-like_sf"/>
</dbReference>
<dbReference type="NCBIfam" id="TIGR01735">
    <property type="entry name" value="FGAM_synt"/>
    <property type="match status" value="1"/>
</dbReference>
<dbReference type="NCBIfam" id="NF003672">
    <property type="entry name" value="PRK05297.1"/>
    <property type="match status" value="1"/>
</dbReference>
<dbReference type="PANTHER" id="PTHR10099">
    <property type="entry name" value="PHOSPHORIBOSYLFORMYLGLYCINAMIDINE SYNTHASE"/>
    <property type="match status" value="1"/>
</dbReference>
<dbReference type="PANTHER" id="PTHR10099:SF1">
    <property type="entry name" value="PHOSPHORIBOSYLFORMYLGLYCINAMIDINE SYNTHASE"/>
    <property type="match status" value="1"/>
</dbReference>
<dbReference type="Pfam" id="PF02769">
    <property type="entry name" value="AIRS_C"/>
    <property type="match status" value="2"/>
</dbReference>
<dbReference type="Pfam" id="PF18072">
    <property type="entry name" value="FGAR-AT_linker"/>
    <property type="match status" value="1"/>
</dbReference>
<dbReference type="Pfam" id="PF18076">
    <property type="entry name" value="FGAR-AT_N"/>
    <property type="match status" value="1"/>
</dbReference>
<dbReference type="Pfam" id="PF22689">
    <property type="entry name" value="FGAR-AT_PurM_N-like"/>
    <property type="match status" value="1"/>
</dbReference>
<dbReference type="Pfam" id="PF13507">
    <property type="entry name" value="GATase_5"/>
    <property type="match status" value="1"/>
</dbReference>
<dbReference type="SMART" id="SM01211">
    <property type="entry name" value="GATase_5"/>
    <property type="match status" value="1"/>
</dbReference>
<dbReference type="SUPFAM" id="SSF52317">
    <property type="entry name" value="Class I glutamine amidotransferase-like"/>
    <property type="match status" value="1"/>
</dbReference>
<dbReference type="SUPFAM" id="SSF109736">
    <property type="entry name" value="FGAM synthase PurL, linker domain"/>
    <property type="match status" value="1"/>
</dbReference>
<dbReference type="SUPFAM" id="SSF56042">
    <property type="entry name" value="PurM C-terminal domain-like"/>
    <property type="match status" value="2"/>
</dbReference>
<dbReference type="SUPFAM" id="SSF55326">
    <property type="entry name" value="PurM N-terminal domain-like"/>
    <property type="match status" value="2"/>
</dbReference>
<dbReference type="SUPFAM" id="SSF82697">
    <property type="entry name" value="PurS-like"/>
    <property type="match status" value="1"/>
</dbReference>
<dbReference type="PROSITE" id="PS51273">
    <property type="entry name" value="GATASE_TYPE_1"/>
    <property type="match status" value="1"/>
</dbReference>
<protein>
    <recommendedName>
        <fullName evidence="1">Phosphoribosylformylglycinamidine synthase</fullName>
        <shortName evidence="1">FGAM synthase</shortName>
        <shortName evidence="1">FGAMS</shortName>
        <ecNumber evidence="1">6.3.5.3</ecNumber>
    </recommendedName>
    <alternativeName>
        <fullName evidence="1">Formylglycinamide ribonucleotide amidotransferase</fullName>
        <shortName evidence="1">FGAR amidotransferase</shortName>
        <shortName evidence="1">FGAR-AT</shortName>
    </alternativeName>
</protein>
<name>PUR4_SALPA</name>
<gene>
    <name evidence="1" type="primary">purL</name>
    <name type="ordered locus">SPA0300</name>
</gene>
<sequence>MMEILRGSPALSAFRINKLLARFQAANLQVHNIYAEYVHFADLNAPLNDSEQAQLTRLLQYGPALNSHTPAGKLLLVTPRPGTISPWSSKATDIAHNCGLQQVDRLERGVAYYIEASTLTAEQWRQVAAELHDRMMETVFSSLTDAEKLFIHHQPAPVSSVDLLGEGRQALIDANLRLGLALAEDEIDYLQEAFTKLGRNPNDIELYMFAQANSEHCRHKIFNADWIIDGKPQPKSLFKMIKNTFETTPDYVLSAYKDNAAVMEGSAVGRYFADHNTGRYDFHQEPAHILMKVETHNHPTAISPWPGAATGSGGEIRDEGATGRGAKPKAGLVGFSVSNLRIPGFEQPWEEDFGKPERIVTALDIMTEGPLGGAAFNNEFGRPALTGYFRTYEDKVNSHNGEELRGYHKPIMLAGGIGNIRADHVQKGEIVVGAKLIVLGGPAMNIGLGGGAASSMASGQSDVDLDFASVQRDNPEMERRCQEVIDRCWQLGDANPILFIHDVGAGGLSNAMPELVSDGGRGGKFELRDILSDEPGMSPLEIWCNESQERYVLAVAADQLPLFDELCKRERAPYAVIGDATEEQHLSLHDNHFDNQPIDLPLDVLLGKTPKMTRDVQTLKAKGDALNRADITIADAVNRVLHLPTVAEKTFLVTIGDRTVTGMVARDQMVGPWQVPVADCAVTTASLDSYYGEAMSIGERAPVALLDFAASARLAVGEALTNIAATQIGDIKRIKLSANWMAAAGHPGEDAGLYDAVKAVGEELCPQLGLTIPVGKDSMSMKTRWQEGNEQREMTSPLSLVISAFARVEDVRHTLTPQLSTEDNALLLIDLGKGHNALGATALAQVYRQLGDKPADVRDVAQLKGFYDAMQALVAARKLLAWHDRSDGGLLVTLAEMAFAGHCGVQVDIAALGDDHLAALFNEELGGVIQVRAEDREAVEALLAQYGLADCVHYLGQALAGDRFVITANDQTVFSESRTTLRVWWAETTWQMQRLRDNPQCADQEHEAKANDADPGLNVKLSFDINEDIAAPYIATGARPKVAVLREQGVNSHVEMAAAFHRAGFDAIDVHMSDLLGGRIGLGNFHALVACGGFSYGDVLGAGEGWAKSILFNPRVRDEFETFFHRPQTLALGVCNGCQMMSNLRELIPGSELWPRFVRNHSDRFEARFSLVEVTQSPSLLLQGMVGSQMPIAVSHGEGRVEVRDDAHLAALESKGLVALRYVDNFGKVTETYPANPNGSPNGITAVTTENGRVTIMMPHPERVFRTVANSWHPENWGEDSPWMRIFRNARKQLG</sequence>
<feature type="chain" id="PRO_0000264592" description="Phosphoribosylformylglycinamidine synthase">
    <location>
        <begin position="1"/>
        <end position="1295"/>
    </location>
</feature>
<feature type="domain" description="Glutamine amidotransferase type-1" evidence="1">
    <location>
        <begin position="1042"/>
        <end position="1295"/>
    </location>
</feature>
<feature type="region of interest" description="Disordered" evidence="2">
    <location>
        <begin position="305"/>
        <end position="327"/>
    </location>
</feature>
<feature type="active site" description="Nucleophile" evidence="1">
    <location>
        <position position="1135"/>
    </location>
</feature>
<feature type="active site" evidence="1">
    <location>
        <position position="1260"/>
    </location>
</feature>
<feature type="active site" evidence="1">
    <location>
        <position position="1262"/>
    </location>
</feature>
<feature type="binding site" evidence="1">
    <location>
        <begin position="307"/>
        <end position="318"/>
    </location>
    <ligand>
        <name>ATP</name>
        <dbReference type="ChEBI" id="CHEBI:30616"/>
    </ligand>
</feature>
<feature type="binding site" evidence="1">
    <location>
        <begin position="386"/>
        <end position="388"/>
    </location>
    <ligand>
        <name>ATP</name>
        <dbReference type="ChEBI" id="CHEBI:30616"/>
    </ligand>
</feature>
<feature type="binding site" evidence="1">
    <location>
        <position position="678"/>
    </location>
    <ligand>
        <name>ATP</name>
        <dbReference type="ChEBI" id="CHEBI:30616"/>
    </ligand>
</feature>
<feature type="binding site" evidence="1">
    <location>
        <position position="679"/>
    </location>
    <ligand>
        <name>Mg(2+)</name>
        <dbReference type="ChEBI" id="CHEBI:18420"/>
    </ligand>
</feature>
<feature type="binding site" evidence="1">
    <location>
        <position position="718"/>
    </location>
    <ligand>
        <name>Mg(2+)</name>
        <dbReference type="ChEBI" id="CHEBI:18420"/>
    </ligand>
</feature>
<feature type="binding site" evidence="1">
    <location>
        <position position="722"/>
    </location>
    <ligand>
        <name>Mg(2+)</name>
        <dbReference type="ChEBI" id="CHEBI:18420"/>
    </ligand>
</feature>
<feature type="binding site" evidence="1">
    <location>
        <position position="884"/>
    </location>
    <ligand>
        <name>Mg(2+)</name>
        <dbReference type="ChEBI" id="CHEBI:18420"/>
    </ligand>
</feature>
<feature type="binding site" evidence="1">
    <location>
        <position position="886"/>
    </location>
    <ligand>
        <name>ATP</name>
        <dbReference type="ChEBI" id="CHEBI:30616"/>
    </ligand>
</feature>
<comment type="function">
    <text evidence="1">Phosphoribosylformylglycinamidine synthase involved in the purines biosynthetic pathway. Catalyzes the ATP-dependent conversion of formylglycinamide ribonucleotide (FGAR) and glutamine to yield formylglycinamidine ribonucleotide (FGAM) and glutamate.</text>
</comment>
<comment type="catalytic activity">
    <reaction evidence="1">
        <text>N(2)-formyl-N(1)-(5-phospho-beta-D-ribosyl)glycinamide + L-glutamine + ATP + H2O = 2-formamido-N(1)-(5-O-phospho-beta-D-ribosyl)acetamidine + L-glutamate + ADP + phosphate + H(+)</text>
        <dbReference type="Rhea" id="RHEA:17129"/>
        <dbReference type="ChEBI" id="CHEBI:15377"/>
        <dbReference type="ChEBI" id="CHEBI:15378"/>
        <dbReference type="ChEBI" id="CHEBI:29985"/>
        <dbReference type="ChEBI" id="CHEBI:30616"/>
        <dbReference type="ChEBI" id="CHEBI:43474"/>
        <dbReference type="ChEBI" id="CHEBI:58359"/>
        <dbReference type="ChEBI" id="CHEBI:147286"/>
        <dbReference type="ChEBI" id="CHEBI:147287"/>
        <dbReference type="ChEBI" id="CHEBI:456216"/>
        <dbReference type="EC" id="6.3.5.3"/>
    </reaction>
</comment>
<comment type="pathway">
    <text evidence="1">Purine metabolism; IMP biosynthesis via de novo pathway; 5-amino-1-(5-phospho-D-ribosyl)imidazole from N(2)-formyl-N(1)-(5-phospho-D-ribosyl)glycinamide: step 1/2.</text>
</comment>
<comment type="subunit">
    <text evidence="1">Monomer.</text>
</comment>
<comment type="subcellular location">
    <subcellularLocation>
        <location evidence="1">Cytoplasm</location>
    </subcellularLocation>
</comment>
<comment type="similarity">
    <text evidence="1">In the N-terminal section; belongs to the FGAMS family.</text>
</comment>
<keyword id="KW-0067">ATP-binding</keyword>
<keyword id="KW-0963">Cytoplasm</keyword>
<keyword id="KW-0315">Glutamine amidotransferase</keyword>
<keyword id="KW-0436">Ligase</keyword>
<keyword id="KW-0460">Magnesium</keyword>
<keyword id="KW-0479">Metal-binding</keyword>
<keyword id="KW-0547">Nucleotide-binding</keyword>
<keyword id="KW-0658">Purine biosynthesis</keyword>